<gene>
    <name type="ORF">SPBC17G9.12c</name>
</gene>
<protein>
    <recommendedName>
        <fullName>CTO1 family protein C17G9.12c</fullName>
    </recommendedName>
</protein>
<accession>Q9UUE0</accession>
<proteinExistence type="inferred from homology"/>
<comment type="subcellular location">
    <subcellularLocation>
        <location evidence="1">Cytoplasm</location>
    </subcellularLocation>
    <subcellularLocation>
        <location evidence="1">Nucleus</location>
    </subcellularLocation>
</comment>
<comment type="similarity">
    <text evidence="2">Belongs to the CTO1 family.</text>
</comment>
<feature type="chain" id="PRO_0000351421" description="CTO1 family protein C17G9.12c">
    <location>
        <begin position="1"/>
        <end position="274"/>
    </location>
</feature>
<evidence type="ECO:0000269" key="1">
    <source>
    </source>
</evidence>
<evidence type="ECO:0000305" key="2"/>
<reference key="1">
    <citation type="journal article" date="2002" name="Nature">
        <title>The genome sequence of Schizosaccharomyces pombe.</title>
        <authorList>
            <person name="Wood V."/>
            <person name="Gwilliam R."/>
            <person name="Rajandream M.A."/>
            <person name="Lyne M.H."/>
            <person name="Lyne R."/>
            <person name="Stewart A."/>
            <person name="Sgouros J.G."/>
            <person name="Peat N."/>
            <person name="Hayles J."/>
            <person name="Baker S.G."/>
            <person name="Basham D."/>
            <person name="Bowman S."/>
            <person name="Brooks K."/>
            <person name="Brown D."/>
            <person name="Brown S."/>
            <person name="Chillingworth T."/>
            <person name="Churcher C.M."/>
            <person name="Collins M."/>
            <person name="Connor R."/>
            <person name="Cronin A."/>
            <person name="Davis P."/>
            <person name="Feltwell T."/>
            <person name="Fraser A."/>
            <person name="Gentles S."/>
            <person name="Goble A."/>
            <person name="Hamlin N."/>
            <person name="Harris D.E."/>
            <person name="Hidalgo J."/>
            <person name="Hodgson G."/>
            <person name="Holroyd S."/>
            <person name="Hornsby T."/>
            <person name="Howarth S."/>
            <person name="Huckle E.J."/>
            <person name="Hunt S."/>
            <person name="Jagels K."/>
            <person name="James K.D."/>
            <person name="Jones L."/>
            <person name="Jones M."/>
            <person name="Leather S."/>
            <person name="McDonald S."/>
            <person name="McLean J."/>
            <person name="Mooney P."/>
            <person name="Moule S."/>
            <person name="Mungall K.L."/>
            <person name="Murphy L.D."/>
            <person name="Niblett D."/>
            <person name="Odell C."/>
            <person name="Oliver K."/>
            <person name="O'Neil S."/>
            <person name="Pearson D."/>
            <person name="Quail M.A."/>
            <person name="Rabbinowitsch E."/>
            <person name="Rutherford K.M."/>
            <person name="Rutter S."/>
            <person name="Saunders D."/>
            <person name="Seeger K."/>
            <person name="Sharp S."/>
            <person name="Skelton J."/>
            <person name="Simmonds M.N."/>
            <person name="Squares R."/>
            <person name="Squares S."/>
            <person name="Stevens K."/>
            <person name="Taylor K."/>
            <person name="Taylor R.G."/>
            <person name="Tivey A."/>
            <person name="Walsh S.V."/>
            <person name="Warren T."/>
            <person name="Whitehead S."/>
            <person name="Woodward J.R."/>
            <person name="Volckaert G."/>
            <person name="Aert R."/>
            <person name="Robben J."/>
            <person name="Grymonprez B."/>
            <person name="Weltjens I."/>
            <person name="Vanstreels E."/>
            <person name="Rieger M."/>
            <person name="Schaefer M."/>
            <person name="Mueller-Auer S."/>
            <person name="Gabel C."/>
            <person name="Fuchs M."/>
            <person name="Duesterhoeft A."/>
            <person name="Fritzc C."/>
            <person name="Holzer E."/>
            <person name="Moestl D."/>
            <person name="Hilbert H."/>
            <person name="Borzym K."/>
            <person name="Langer I."/>
            <person name="Beck A."/>
            <person name="Lehrach H."/>
            <person name="Reinhardt R."/>
            <person name="Pohl T.M."/>
            <person name="Eger P."/>
            <person name="Zimmermann W."/>
            <person name="Wedler H."/>
            <person name="Wambutt R."/>
            <person name="Purnelle B."/>
            <person name="Goffeau A."/>
            <person name="Cadieu E."/>
            <person name="Dreano S."/>
            <person name="Gloux S."/>
            <person name="Lelaure V."/>
            <person name="Mottier S."/>
            <person name="Galibert F."/>
            <person name="Aves S.J."/>
            <person name="Xiang Z."/>
            <person name="Hunt C."/>
            <person name="Moore K."/>
            <person name="Hurst S.M."/>
            <person name="Lucas M."/>
            <person name="Rochet M."/>
            <person name="Gaillardin C."/>
            <person name="Tallada V.A."/>
            <person name="Garzon A."/>
            <person name="Thode G."/>
            <person name="Daga R.R."/>
            <person name="Cruzado L."/>
            <person name="Jimenez J."/>
            <person name="Sanchez M."/>
            <person name="del Rey F."/>
            <person name="Benito J."/>
            <person name="Dominguez A."/>
            <person name="Revuelta J.L."/>
            <person name="Moreno S."/>
            <person name="Armstrong J."/>
            <person name="Forsburg S.L."/>
            <person name="Cerutti L."/>
            <person name="Lowe T."/>
            <person name="McCombie W.R."/>
            <person name="Paulsen I."/>
            <person name="Potashkin J."/>
            <person name="Shpakovski G.V."/>
            <person name="Ussery D."/>
            <person name="Barrell B.G."/>
            <person name="Nurse P."/>
        </authorList>
    </citation>
    <scope>NUCLEOTIDE SEQUENCE [LARGE SCALE GENOMIC DNA]</scope>
    <source>
        <strain>972 / ATCC 24843</strain>
    </source>
</reference>
<reference key="2">
    <citation type="journal article" date="2006" name="Nat. Biotechnol.">
        <title>ORFeome cloning and global analysis of protein localization in the fission yeast Schizosaccharomyces pombe.</title>
        <authorList>
            <person name="Matsuyama A."/>
            <person name="Arai R."/>
            <person name="Yashiroda Y."/>
            <person name="Shirai A."/>
            <person name="Kamata A."/>
            <person name="Sekido S."/>
            <person name="Kobayashi Y."/>
            <person name="Hashimoto A."/>
            <person name="Hamamoto M."/>
            <person name="Hiraoka Y."/>
            <person name="Horinouchi S."/>
            <person name="Yoshida M."/>
        </authorList>
    </citation>
    <scope>SUBCELLULAR LOCATION [LARGE SCALE ANALYSIS]</scope>
</reference>
<organism>
    <name type="scientific">Schizosaccharomyces pombe (strain 972 / ATCC 24843)</name>
    <name type="common">Fission yeast</name>
    <dbReference type="NCBI Taxonomy" id="284812"/>
    <lineage>
        <taxon>Eukaryota</taxon>
        <taxon>Fungi</taxon>
        <taxon>Dikarya</taxon>
        <taxon>Ascomycota</taxon>
        <taxon>Taphrinomycotina</taxon>
        <taxon>Schizosaccharomycetes</taxon>
        <taxon>Schizosaccharomycetales</taxon>
        <taxon>Schizosaccharomycetaceae</taxon>
        <taxon>Schizosaccharomyces</taxon>
    </lineage>
</organism>
<sequence>MLYIVDFDETITTYDTIHLLAEAVNKPEEWSVISDKYWQEYLAWREALPHSTTLTSYLPLLGGSRYLEEASIKRIEKSQYFSGLSEGALDNIVQLITLRAGFVEFINALVPDLRVSKTIFHVLSVNWSARVIEQTLLHHTDLTADLLCVHANDFDFDTSTNTTNGRILARNASSLLMNSTDKVREFRRIVQTDAVSSPLNVVYIGDSPTDFGCLQISPISILMRSNQKYYDILSRFEDVQLVDISEFPVQKAVPGKKIIYTCSDWCAIQKAFLA</sequence>
<name>CTO1_SCHPO</name>
<keyword id="KW-0963">Cytoplasm</keyword>
<keyword id="KW-0539">Nucleus</keyword>
<keyword id="KW-1185">Reference proteome</keyword>
<dbReference type="EMBL" id="CU329671">
    <property type="protein sequence ID" value="CAB52810.1"/>
    <property type="molecule type" value="Genomic_DNA"/>
</dbReference>
<dbReference type="PIR" id="T39735">
    <property type="entry name" value="T39735"/>
</dbReference>
<dbReference type="RefSeq" id="NP_595901.1">
    <property type="nucleotide sequence ID" value="NM_001021808.2"/>
</dbReference>
<dbReference type="BioGRID" id="276386">
    <property type="interactions" value="2"/>
</dbReference>
<dbReference type="FunCoup" id="Q9UUE0">
    <property type="interactions" value="3"/>
</dbReference>
<dbReference type="STRING" id="284812.Q9UUE0"/>
<dbReference type="PaxDb" id="4896-SPBC17G9.12c.1"/>
<dbReference type="EnsemblFungi" id="SPBC17G9.12c.1">
    <property type="protein sequence ID" value="SPBC17G9.12c.1:pep"/>
    <property type="gene ID" value="SPBC17G9.12c"/>
</dbReference>
<dbReference type="KEGG" id="spo:2539837"/>
<dbReference type="PomBase" id="SPBC17G9.12c"/>
<dbReference type="VEuPathDB" id="FungiDB:SPBC17G9.12c"/>
<dbReference type="eggNOG" id="ENOG502S7B4">
    <property type="taxonomic scope" value="Eukaryota"/>
</dbReference>
<dbReference type="HOGENOM" id="CLU_056574_2_0_1"/>
<dbReference type="InParanoid" id="Q9UUE0"/>
<dbReference type="OMA" id="STTDMEC"/>
<dbReference type="PhylomeDB" id="Q9UUE0"/>
<dbReference type="PRO" id="PR:Q9UUE0"/>
<dbReference type="Proteomes" id="UP000002485">
    <property type="component" value="Chromosome II"/>
</dbReference>
<dbReference type="GO" id="GO:0005829">
    <property type="term" value="C:cytosol"/>
    <property type="evidence" value="ECO:0007005"/>
    <property type="project" value="PomBase"/>
</dbReference>
<dbReference type="GO" id="GO:0005634">
    <property type="term" value="C:nucleus"/>
    <property type="evidence" value="ECO:0007005"/>
    <property type="project" value="PomBase"/>
</dbReference>
<dbReference type="GO" id="GO:0016787">
    <property type="term" value="F:hydrolase activity"/>
    <property type="evidence" value="ECO:0000255"/>
    <property type="project" value="PomBase"/>
</dbReference>
<dbReference type="FunFam" id="3.40.50.1000:FF:000456">
    <property type="entry name" value="UPF0655 protein C17G9.12c"/>
    <property type="match status" value="1"/>
</dbReference>
<dbReference type="Gene3D" id="3.40.50.1000">
    <property type="entry name" value="HAD superfamily/HAD-like"/>
    <property type="match status" value="1"/>
</dbReference>
<dbReference type="InterPro" id="IPR050849">
    <property type="entry name" value="HAD-like_hydrolase_phosphatase"/>
</dbReference>
<dbReference type="InterPro" id="IPR036412">
    <property type="entry name" value="HAD-like_sf"/>
</dbReference>
<dbReference type="InterPro" id="IPR023214">
    <property type="entry name" value="HAD_sf"/>
</dbReference>
<dbReference type="PANTHER" id="PTHR28181:SF1">
    <property type="entry name" value="COLD TOLERANCE PROTEIN 1"/>
    <property type="match status" value="1"/>
</dbReference>
<dbReference type="PANTHER" id="PTHR28181">
    <property type="entry name" value="UPF0655 PROTEIN YCR015C"/>
    <property type="match status" value="1"/>
</dbReference>
<dbReference type="SUPFAM" id="SSF56784">
    <property type="entry name" value="HAD-like"/>
    <property type="match status" value="1"/>
</dbReference>